<feature type="chain" id="PRO_0000239629" description="Bromodomain-containing factor 2">
    <location>
        <begin position="1"/>
        <end position="638"/>
    </location>
</feature>
<feature type="domain" description="Bromo 1" evidence="3">
    <location>
        <begin position="130"/>
        <end position="239"/>
    </location>
</feature>
<feature type="domain" description="Bromo 2" evidence="3">
    <location>
        <begin position="317"/>
        <end position="426"/>
    </location>
</feature>
<feature type="domain" description="NET" evidence="4">
    <location>
        <begin position="506"/>
        <end position="590"/>
    </location>
</feature>
<feature type="region of interest" description="Disordered" evidence="5">
    <location>
        <begin position="1"/>
        <end position="54"/>
    </location>
</feature>
<feature type="region of interest" description="Disordered" evidence="5">
    <location>
        <begin position="250"/>
        <end position="306"/>
    </location>
</feature>
<feature type="region of interest" description="Disordered" evidence="5">
    <location>
        <begin position="435"/>
        <end position="460"/>
    </location>
</feature>
<feature type="region of interest" description="Disordered" evidence="5">
    <location>
        <begin position="586"/>
        <end position="638"/>
    </location>
</feature>
<feature type="coiled-coil region" evidence="2">
    <location>
        <begin position="468"/>
        <end position="537"/>
    </location>
</feature>
<feature type="compositionally biased region" description="Basic and acidic residues" evidence="5">
    <location>
        <begin position="1"/>
        <end position="10"/>
    </location>
</feature>
<feature type="compositionally biased region" description="Low complexity" evidence="5">
    <location>
        <begin position="25"/>
        <end position="43"/>
    </location>
</feature>
<feature type="compositionally biased region" description="Polar residues" evidence="5">
    <location>
        <begin position="271"/>
        <end position="281"/>
    </location>
</feature>
<feature type="compositionally biased region" description="Acidic residues" evidence="5">
    <location>
        <begin position="450"/>
        <end position="460"/>
    </location>
</feature>
<feature type="compositionally biased region" description="Acidic residues" evidence="5">
    <location>
        <begin position="624"/>
        <end position="638"/>
    </location>
</feature>
<feature type="modified residue" description="Phosphoserine" evidence="12">
    <location>
        <position position="264"/>
    </location>
</feature>
<proteinExistence type="evidence at protein level"/>
<reference key="1">
    <citation type="journal article" date="1997" name="Nature">
        <title>The nucleotide sequence of Saccharomyces cerevisiae chromosome IV.</title>
        <authorList>
            <person name="Jacq C."/>
            <person name="Alt-Moerbe J."/>
            <person name="Andre B."/>
            <person name="Arnold W."/>
            <person name="Bahr A."/>
            <person name="Ballesta J.P.G."/>
            <person name="Bargues M."/>
            <person name="Baron L."/>
            <person name="Becker A."/>
            <person name="Biteau N."/>
            <person name="Bloecker H."/>
            <person name="Blugeon C."/>
            <person name="Boskovic J."/>
            <person name="Brandt P."/>
            <person name="Brueckner M."/>
            <person name="Buitrago M.J."/>
            <person name="Coster F."/>
            <person name="Delaveau T."/>
            <person name="del Rey F."/>
            <person name="Dujon B."/>
            <person name="Eide L.G."/>
            <person name="Garcia-Cantalejo J.M."/>
            <person name="Goffeau A."/>
            <person name="Gomez-Peris A."/>
            <person name="Granotier C."/>
            <person name="Hanemann V."/>
            <person name="Hankeln T."/>
            <person name="Hoheisel J.D."/>
            <person name="Jaeger W."/>
            <person name="Jimenez A."/>
            <person name="Jonniaux J.-L."/>
            <person name="Kraemer C."/>
            <person name="Kuester H."/>
            <person name="Laamanen P."/>
            <person name="Legros Y."/>
            <person name="Louis E.J."/>
            <person name="Moeller-Rieker S."/>
            <person name="Monnet A."/>
            <person name="Moro M."/>
            <person name="Mueller-Auer S."/>
            <person name="Nussbaumer B."/>
            <person name="Paricio N."/>
            <person name="Paulin L."/>
            <person name="Perea J."/>
            <person name="Perez-Alonso M."/>
            <person name="Perez-Ortin J.E."/>
            <person name="Pohl T.M."/>
            <person name="Prydz H."/>
            <person name="Purnelle B."/>
            <person name="Rasmussen S.W."/>
            <person name="Remacha M.A."/>
            <person name="Revuelta J.L."/>
            <person name="Rieger M."/>
            <person name="Salom D."/>
            <person name="Saluz H.P."/>
            <person name="Saiz J.E."/>
            <person name="Saren A.-M."/>
            <person name="Schaefer M."/>
            <person name="Scharfe M."/>
            <person name="Schmidt E.R."/>
            <person name="Schneider C."/>
            <person name="Scholler P."/>
            <person name="Schwarz S."/>
            <person name="Soler-Mira A."/>
            <person name="Urrestarazu L.A."/>
            <person name="Verhasselt P."/>
            <person name="Vissers S."/>
            <person name="Voet M."/>
            <person name="Volckaert G."/>
            <person name="Wagner G."/>
            <person name="Wambutt R."/>
            <person name="Wedler E."/>
            <person name="Wedler H."/>
            <person name="Woelfl S."/>
            <person name="Harris D.E."/>
            <person name="Bowman S."/>
            <person name="Brown D."/>
            <person name="Churcher C.M."/>
            <person name="Connor R."/>
            <person name="Dedman K."/>
            <person name="Gentles S."/>
            <person name="Hamlin N."/>
            <person name="Hunt S."/>
            <person name="Jones L."/>
            <person name="McDonald S."/>
            <person name="Murphy L.D."/>
            <person name="Niblett D."/>
            <person name="Odell C."/>
            <person name="Oliver K."/>
            <person name="Rajandream M.A."/>
            <person name="Richards C."/>
            <person name="Shore L."/>
            <person name="Walsh S.V."/>
            <person name="Barrell B.G."/>
            <person name="Dietrich F.S."/>
            <person name="Mulligan J.T."/>
            <person name="Allen E."/>
            <person name="Araujo R."/>
            <person name="Aviles E."/>
            <person name="Berno A."/>
            <person name="Carpenter J."/>
            <person name="Chen E."/>
            <person name="Cherry J.M."/>
            <person name="Chung E."/>
            <person name="Duncan M."/>
            <person name="Hunicke-Smith S."/>
            <person name="Hyman R.W."/>
            <person name="Komp C."/>
            <person name="Lashkari D."/>
            <person name="Lew H."/>
            <person name="Lin D."/>
            <person name="Mosedale D."/>
            <person name="Nakahara K."/>
            <person name="Namath A."/>
            <person name="Oefner P."/>
            <person name="Oh C."/>
            <person name="Petel F.X."/>
            <person name="Roberts D."/>
            <person name="Schramm S."/>
            <person name="Schroeder M."/>
            <person name="Shogren T."/>
            <person name="Shroff N."/>
            <person name="Winant A."/>
            <person name="Yelton M.A."/>
            <person name="Botstein D."/>
            <person name="Davis R.W."/>
            <person name="Johnston M."/>
            <person name="Andrews S."/>
            <person name="Brinkman R."/>
            <person name="Cooper J."/>
            <person name="Ding H."/>
            <person name="Du Z."/>
            <person name="Favello A."/>
            <person name="Fulton L."/>
            <person name="Gattung S."/>
            <person name="Greco T."/>
            <person name="Hallsworth K."/>
            <person name="Hawkins J."/>
            <person name="Hillier L.W."/>
            <person name="Jier M."/>
            <person name="Johnson D."/>
            <person name="Johnston L."/>
            <person name="Kirsten J."/>
            <person name="Kucaba T."/>
            <person name="Langston Y."/>
            <person name="Latreille P."/>
            <person name="Le T."/>
            <person name="Mardis E."/>
            <person name="Menezes S."/>
            <person name="Miller N."/>
            <person name="Nhan M."/>
            <person name="Pauley A."/>
            <person name="Peluso D."/>
            <person name="Rifkin L."/>
            <person name="Riles L."/>
            <person name="Taich A."/>
            <person name="Trevaskis E."/>
            <person name="Vignati D."/>
            <person name="Wilcox L."/>
            <person name="Wohldman P."/>
            <person name="Vaudin M."/>
            <person name="Wilson R."/>
            <person name="Waterston R."/>
            <person name="Albermann K."/>
            <person name="Hani J."/>
            <person name="Heumann K."/>
            <person name="Kleine K."/>
            <person name="Mewes H.-W."/>
            <person name="Zollner A."/>
            <person name="Zaccaria P."/>
        </authorList>
    </citation>
    <scope>NUCLEOTIDE SEQUENCE [LARGE SCALE GENOMIC DNA]</scope>
    <source>
        <strain>ATCC 204508 / S288c</strain>
    </source>
</reference>
<reference key="2">
    <citation type="journal article" date="2014" name="G3 (Bethesda)">
        <title>The reference genome sequence of Saccharomyces cerevisiae: Then and now.</title>
        <authorList>
            <person name="Engel S.R."/>
            <person name="Dietrich F.S."/>
            <person name="Fisk D.G."/>
            <person name="Binkley G."/>
            <person name="Balakrishnan R."/>
            <person name="Costanzo M.C."/>
            <person name="Dwight S.S."/>
            <person name="Hitz B.C."/>
            <person name="Karra K."/>
            <person name="Nash R.S."/>
            <person name="Weng S."/>
            <person name="Wong E.D."/>
            <person name="Lloyd P."/>
            <person name="Skrzypek M.S."/>
            <person name="Miyasato S.R."/>
            <person name="Simison M."/>
            <person name="Cherry J.M."/>
        </authorList>
    </citation>
    <scope>GENOME REANNOTATION</scope>
    <source>
        <strain>ATCC 204508 / S288c</strain>
    </source>
</reference>
<reference key="3">
    <citation type="journal article" date="1997" name="Trends Biochem. Sci.">
        <title>The bromodomain revisited.</title>
        <authorList>
            <person name="Jeanmougin F."/>
            <person name="Wurtz J.-M."/>
            <person name="Le Douarin B."/>
            <person name="Chambon P."/>
            <person name="Losson R."/>
        </authorList>
    </citation>
    <scope>DOMAIN BROMODOMAIN</scope>
</reference>
<reference key="4">
    <citation type="journal article" date="2000" name="Genes Dev.">
        <title>Bromodomain factor 1 corresponds to a missing piece of yeast TFIID.</title>
        <authorList>
            <person name="Matangkasombut O."/>
            <person name="Buratowski R.M."/>
            <person name="Swilling N.W."/>
            <person name="Buratowski S."/>
        </authorList>
    </citation>
    <scope>INTERACTION WITH TAF7</scope>
</reference>
<reference key="5">
    <citation type="journal article" date="2003" name="Mol. Cell">
        <title>Different sensitivities of bromodomain factors 1 and 2 to histone H4 acetylation.</title>
        <authorList>
            <person name="Matangkasombut O."/>
            <person name="Buratowski S."/>
        </authorList>
    </citation>
    <scope>FUNCTION</scope>
    <scope>INTERACTION WITH HISTONE H4</scope>
</reference>
<reference key="6">
    <citation type="journal article" date="2003" name="Nature">
        <title>Global analysis of protein localization in budding yeast.</title>
        <authorList>
            <person name="Huh W.-K."/>
            <person name="Falvo J.V."/>
            <person name="Gerke L.C."/>
            <person name="Carroll A.S."/>
            <person name="Howson R.W."/>
            <person name="Weissman J.S."/>
            <person name="O'Shea E.K."/>
        </authorList>
    </citation>
    <scope>SUBCELLULAR LOCATION [LARGE SCALE ANALYSIS]</scope>
</reference>
<reference key="7">
    <citation type="journal article" date="2003" name="Nature">
        <title>Global analysis of protein expression in yeast.</title>
        <authorList>
            <person name="Ghaemmaghami S."/>
            <person name="Huh W.-K."/>
            <person name="Bower K."/>
            <person name="Howson R.W."/>
            <person name="Belle A."/>
            <person name="Dephoure N."/>
            <person name="O'Shea E.K."/>
            <person name="Weissman J.S."/>
        </authorList>
    </citation>
    <scope>LEVEL OF PROTEIN EXPRESSION [LARGE SCALE ANALYSIS]</scope>
</reference>
<reference key="8">
    <citation type="journal article" date="2004" name="Mol. Cell. Biol.">
        <title>Bromodomain factor 1 (Bdf1) is phosphorylated by protein kinase CK2.</title>
        <authorList>
            <person name="Sawa C."/>
            <person name="Nedea E."/>
            <person name="Krogan N."/>
            <person name="Wada T."/>
            <person name="Handa H."/>
            <person name="Greenblatt J."/>
            <person name="Buratowski S."/>
        </authorList>
    </citation>
    <scope>PHOSPHORYLATION BY THE CK2 PROTEIN KINASE COMPLEX</scope>
</reference>
<reference key="9">
    <citation type="journal article" date="2007" name="J. Proteome Res.">
        <title>Large-scale phosphorylation analysis of alpha-factor-arrested Saccharomyces cerevisiae.</title>
        <authorList>
            <person name="Li X."/>
            <person name="Gerber S.A."/>
            <person name="Rudner A.D."/>
            <person name="Beausoleil S.A."/>
            <person name="Haas W."/>
            <person name="Villen J."/>
            <person name="Elias J.E."/>
            <person name="Gygi S.P."/>
        </authorList>
    </citation>
    <scope>PHOSPHORYLATION [LARGE SCALE ANALYSIS] AT SER-264</scope>
    <scope>IDENTIFICATION BY MASS SPECTROMETRY [LARGE SCALE ANALYSIS]</scope>
    <source>
        <strain>ADR376</strain>
    </source>
</reference>
<reference key="10">
    <citation type="journal article" date="2008" name="Mol. Cell. Proteomics">
        <title>A multidimensional chromatography technology for in-depth phosphoproteome analysis.</title>
        <authorList>
            <person name="Albuquerque C.P."/>
            <person name="Smolka M.B."/>
            <person name="Payne S.H."/>
            <person name="Bafna V."/>
            <person name="Eng J."/>
            <person name="Zhou H."/>
        </authorList>
    </citation>
    <scope>IDENTIFICATION BY MASS SPECTROMETRY [LARGE SCALE ANALYSIS]</scope>
</reference>
<reference key="11">
    <citation type="journal article" date="2009" name="Science">
        <title>Global analysis of Cdk1 substrate phosphorylation sites provides insights into evolution.</title>
        <authorList>
            <person name="Holt L.J."/>
            <person name="Tuch B.B."/>
            <person name="Villen J."/>
            <person name="Johnson A.D."/>
            <person name="Gygi S.P."/>
            <person name="Morgan D.O."/>
        </authorList>
    </citation>
    <scope>IDENTIFICATION BY MASS SPECTROMETRY [LARGE SCALE ANALYSIS]</scope>
</reference>
<evidence type="ECO:0000250" key="1"/>
<evidence type="ECO:0000255" key="2"/>
<evidence type="ECO:0000255" key="3">
    <source>
        <dbReference type="PROSITE-ProRule" id="PRU00035"/>
    </source>
</evidence>
<evidence type="ECO:0000255" key="4">
    <source>
        <dbReference type="PROSITE-ProRule" id="PRU00857"/>
    </source>
</evidence>
<evidence type="ECO:0000256" key="5">
    <source>
        <dbReference type="SAM" id="MobiDB-lite"/>
    </source>
</evidence>
<evidence type="ECO:0000269" key="6">
    <source>
    </source>
</evidence>
<evidence type="ECO:0000269" key="7">
    <source>
    </source>
</evidence>
<evidence type="ECO:0000269" key="8">
    <source>
    </source>
</evidence>
<evidence type="ECO:0000269" key="9">
    <source>
    </source>
</evidence>
<evidence type="ECO:0000269" key="10">
    <source>
    </source>
</evidence>
<evidence type="ECO:0000305" key="11"/>
<evidence type="ECO:0007744" key="12">
    <source>
    </source>
</evidence>
<accession>Q07442</accession>
<accession>D6VRS8</accession>
<comment type="function">
    <text evidence="1 7">Transcription factor involved in the expression of a broad class of genes including snRNAs. Required for sporulation and DNA-damage repair. Prevents the spreading of SIR silencing at telomeres and protects histone H4, but not H3, from deacetylation (By similarity).</text>
</comment>
<comment type="subunit">
    <text evidence="6 7">Interacts with the TFIID subunit TAF7 and with histone H4.</text>
</comment>
<comment type="interaction">
    <interactant intactId="EBI-37620">
        <id>Q07442</id>
    </interactant>
    <interactant intactId="EBI-3493">
        <id>P35817</id>
        <label>BDF1</label>
    </interactant>
    <organismsDiffer>false</organismsDiffer>
    <experiments>6</experiments>
</comment>
<comment type="subcellular location">
    <subcellularLocation>
        <location evidence="8">Cytoplasm</location>
    </subcellularLocation>
    <subcellularLocation>
        <location evidence="8">Nucleus</location>
    </subcellularLocation>
</comment>
<comment type="PTM">
    <text evidence="10">Phosphorylated by the casein kinase CK2 complex.</text>
</comment>
<comment type="miscellaneous">
    <text evidence="9">Present with 2930 molecules/cell in log phase SD medium.</text>
</comment>
<comment type="similarity">
    <text evidence="11">Belongs to the BET family.</text>
</comment>
<dbReference type="EMBL" id="Z74119">
    <property type="protein sequence ID" value="CAA98636.1"/>
    <property type="molecule type" value="Genomic_DNA"/>
</dbReference>
<dbReference type="EMBL" id="BK006938">
    <property type="protein sequence ID" value="DAA11788.1"/>
    <property type="molecule type" value="Genomic_DNA"/>
</dbReference>
<dbReference type="PIR" id="S67605">
    <property type="entry name" value="S67605"/>
</dbReference>
<dbReference type="RefSeq" id="NP_010213.1">
    <property type="nucleotide sequence ID" value="NM_001180129.1"/>
</dbReference>
<dbReference type="SMR" id="Q07442"/>
<dbReference type="BioGRID" id="31990">
    <property type="interactions" value="218"/>
</dbReference>
<dbReference type="DIP" id="DIP-1337N"/>
<dbReference type="FunCoup" id="Q07442">
    <property type="interactions" value="657"/>
</dbReference>
<dbReference type="IntAct" id="Q07442">
    <property type="interactions" value="26"/>
</dbReference>
<dbReference type="MINT" id="Q07442"/>
<dbReference type="STRING" id="4932.YDL070W"/>
<dbReference type="iPTMnet" id="Q07442"/>
<dbReference type="PaxDb" id="4932-YDL070W"/>
<dbReference type="PeptideAtlas" id="Q07442"/>
<dbReference type="EnsemblFungi" id="YDL070W_mRNA">
    <property type="protein sequence ID" value="YDL070W"/>
    <property type="gene ID" value="YDL070W"/>
</dbReference>
<dbReference type="GeneID" id="851488"/>
<dbReference type="KEGG" id="sce:YDL070W"/>
<dbReference type="AGR" id="SGD:S000002228"/>
<dbReference type="SGD" id="S000002228">
    <property type="gene designation" value="BDF2"/>
</dbReference>
<dbReference type="VEuPathDB" id="FungiDB:YDL070W"/>
<dbReference type="eggNOG" id="KOG1474">
    <property type="taxonomic scope" value="Eukaryota"/>
</dbReference>
<dbReference type="GeneTree" id="ENSGT00940000176400"/>
<dbReference type="HOGENOM" id="CLU_001499_4_0_1"/>
<dbReference type="InParanoid" id="Q07442"/>
<dbReference type="OrthoDB" id="784962at2759"/>
<dbReference type="BioCyc" id="YEAST:G3O-29482-MONOMER"/>
<dbReference type="BioGRID-ORCS" id="851488">
    <property type="hits" value="0 hits in 10 CRISPR screens"/>
</dbReference>
<dbReference type="PRO" id="PR:Q07442"/>
<dbReference type="Proteomes" id="UP000002311">
    <property type="component" value="Chromosome IV"/>
</dbReference>
<dbReference type="RNAct" id="Q07442">
    <property type="molecule type" value="protein"/>
</dbReference>
<dbReference type="GO" id="GO:0071944">
    <property type="term" value="C:cell periphery"/>
    <property type="evidence" value="ECO:0007005"/>
    <property type="project" value="SGD"/>
</dbReference>
<dbReference type="GO" id="GO:0000785">
    <property type="term" value="C:chromatin"/>
    <property type="evidence" value="ECO:0000318"/>
    <property type="project" value="GO_Central"/>
</dbReference>
<dbReference type="GO" id="GO:0005737">
    <property type="term" value="C:cytoplasm"/>
    <property type="evidence" value="ECO:0007669"/>
    <property type="project" value="UniProtKB-SubCell"/>
</dbReference>
<dbReference type="GO" id="GO:0005634">
    <property type="term" value="C:nucleus"/>
    <property type="evidence" value="ECO:0000318"/>
    <property type="project" value="GO_Central"/>
</dbReference>
<dbReference type="GO" id="GO:0001046">
    <property type="term" value="F:core promoter sequence-specific DNA binding"/>
    <property type="evidence" value="ECO:0000314"/>
    <property type="project" value="SGD"/>
</dbReference>
<dbReference type="GO" id="GO:0042393">
    <property type="term" value="F:histone binding"/>
    <property type="evidence" value="ECO:0000314"/>
    <property type="project" value="SGD"/>
</dbReference>
<dbReference type="GO" id="GO:0140566">
    <property type="term" value="F:histone reader activity"/>
    <property type="evidence" value="ECO:0000314"/>
    <property type="project" value="GO_Central"/>
</dbReference>
<dbReference type="GO" id="GO:0070577">
    <property type="term" value="F:lysine-acetylated histone binding"/>
    <property type="evidence" value="ECO:0000314"/>
    <property type="project" value="SGD"/>
</dbReference>
<dbReference type="GO" id="GO:0001094">
    <property type="term" value="F:TFIID-class transcription factor complex binding"/>
    <property type="evidence" value="ECO:0000353"/>
    <property type="project" value="SGD"/>
</dbReference>
<dbReference type="GO" id="GO:0006338">
    <property type="term" value="P:chromatin remodeling"/>
    <property type="evidence" value="ECO:0000318"/>
    <property type="project" value="GO_Central"/>
</dbReference>
<dbReference type="GO" id="GO:0006281">
    <property type="term" value="P:DNA repair"/>
    <property type="evidence" value="ECO:0007669"/>
    <property type="project" value="UniProtKB-KW"/>
</dbReference>
<dbReference type="GO" id="GO:0031452">
    <property type="term" value="P:negative regulation of heterochromatin formation"/>
    <property type="evidence" value="ECO:0000315"/>
    <property type="project" value="SGD"/>
</dbReference>
<dbReference type="GO" id="GO:0030435">
    <property type="term" value="P:sporulation resulting in formation of a cellular spore"/>
    <property type="evidence" value="ECO:0007669"/>
    <property type="project" value="UniProtKB-KW"/>
</dbReference>
<dbReference type="CDD" id="cd05500">
    <property type="entry name" value="Bromo_BDF1_2_I"/>
    <property type="match status" value="1"/>
</dbReference>
<dbReference type="CDD" id="cd05499">
    <property type="entry name" value="Bromo_BDF1_2_II"/>
    <property type="match status" value="1"/>
</dbReference>
<dbReference type="FunFam" id="1.20.920.10:FF:000047">
    <property type="entry name" value="Bromodomain-containing factor 1"/>
    <property type="match status" value="1"/>
</dbReference>
<dbReference type="FunFam" id="1.20.920.10:FF:000072">
    <property type="entry name" value="Bromodomain-containing factor 2"/>
    <property type="match status" value="1"/>
</dbReference>
<dbReference type="Gene3D" id="1.20.1270.220">
    <property type="match status" value="1"/>
</dbReference>
<dbReference type="Gene3D" id="1.20.920.10">
    <property type="entry name" value="Bromodomain-like"/>
    <property type="match status" value="2"/>
</dbReference>
<dbReference type="InterPro" id="IPR050935">
    <property type="entry name" value="Bromo_chromatin_reader"/>
</dbReference>
<dbReference type="InterPro" id="IPR001487">
    <property type="entry name" value="Bromodomain"/>
</dbReference>
<dbReference type="InterPro" id="IPR036427">
    <property type="entry name" value="Bromodomain-like_sf"/>
</dbReference>
<dbReference type="InterPro" id="IPR018359">
    <property type="entry name" value="Bromodomain_CS"/>
</dbReference>
<dbReference type="InterPro" id="IPR027353">
    <property type="entry name" value="NET_dom"/>
</dbReference>
<dbReference type="InterPro" id="IPR038336">
    <property type="entry name" value="NET_sf"/>
</dbReference>
<dbReference type="PANTHER" id="PTHR22880:SF225">
    <property type="entry name" value="BROMODOMAIN-CONTAINING PROTEIN BET-1-RELATED"/>
    <property type="match status" value="1"/>
</dbReference>
<dbReference type="PANTHER" id="PTHR22880">
    <property type="entry name" value="FALZ-RELATED BROMODOMAIN-CONTAINING PROTEINS"/>
    <property type="match status" value="1"/>
</dbReference>
<dbReference type="Pfam" id="PF17035">
    <property type="entry name" value="BET"/>
    <property type="match status" value="1"/>
</dbReference>
<dbReference type="Pfam" id="PF00439">
    <property type="entry name" value="Bromodomain"/>
    <property type="match status" value="2"/>
</dbReference>
<dbReference type="PRINTS" id="PR00503">
    <property type="entry name" value="BROMODOMAIN"/>
</dbReference>
<dbReference type="SMART" id="SM00297">
    <property type="entry name" value="BROMO"/>
    <property type="match status" value="2"/>
</dbReference>
<dbReference type="SUPFAM" id="SSF47370">
    <property type="entry name" value="Bromodomain"/>
    <property type="match status" value="2"/>
</dbReference>
<dbReference type="PROSITE" id="PS00633">
    <property type="entry name" value="BROMODOMAIN_1"/>
    <property type="match status" value="1"/>
</dbReference>
<dbReference type="PROSITE" id="PS50014">
    <property type="entry name" value="BROMODOMAIN_2"/>
    <property type="match status" value="2"/>
</dbReference>
<dbReference type="PROSITE" id="PS51525">
    <property type="entry name" value="NET"/>
    <property type="match status" value="1"/>
</dbReference>
<gene>
    <name type="primary">BDF2</name>
    <name type="ordered locus">YDL070W</name>
</gene>
<name>BDF2_YEAST</name>
<keyword id="KW-0103">Bromodomain</keyword>
<keyword id="KW-0175">Coiled coil</keyword>
<keyword id="KW-0963">Cytoplasm</keyword>
<keyword id="KW-0227">DNA damage</keyword>
<keyword id="KW-0234">DNA repair</keyword>
<keyword id="KW-0539">Nucleus</keyword>
<keyword id="KW-0597">Phosphoprotein</keyword>
<keyword id="KW-1185">Reference proteome</keyword>
<keyword id="KW-0677">Repeat</keyword>
<keyword id="KW-0749">Sporulation</keyword>
<keyword id="KW-0804">Transcription</keyword>
<keyword id="KW-0805">Transcription regulation</keyword>
<organism>
    <name type="scientific">Saccharomyces cerevisiae (strain ATCC 204508 / S288c)</name>
    <name type="common">Baker's yeast</name>
    <dbReference type="NCBI Taxonomy" id="559292"/>
    <lineage>
        <taxon>Eukaryota</taxon>
        <taxon>Fungi</taxon>
        <taxon>Dikarya</taxon>
        <taxon>Ascomycota</taxon>
        <taxon>Saccharomycotina</taxon>
        <taxon>Saccharomycetes</taxon>
        <taxon>Saccharomycetales</taxon>
        <taxon>Saccharomycetaceae</taxon>
        <taxon>Saccharomyces</taxon>
    </lineage>
</organism>
<protein>
    <recommendedName>
        <fullName>Bromodomain-containing factor 2</fullName>
    </recommendedName>
</protein>
<sequence length="638" mass="72513">MSRTNMDTRHAHSALLAAPQSATANSRSSNSSSESSSNKNNINVGVGDDSGNVSAVSIDDGPHFRDIFHYGHEENYKLASSGITNLNSSSHAHQTLSPISISNASTPESFPEHPLGLERETEPALEAEMEAEELPPHQSKYLLSSIKATKRLKDARPFLKPVDPIALNIPHYFNYVQTPMDLSLIETKLQGNVYHSVEQVTSDFKTMVDNCLNFNGPESSISSMAKRIQKYFEKKLSAMPPRVLPASALKKTSRNRKKNEDMDSPLVIRRSVSTTNDNIGESGNREGVSGGRPKRTIHPPKSKDLFDIYENSKPKSKTLQKKFRTCLKILKVLMSKKNSDINFPFLQPVDPIALNLPNYFDVVKNPMDLGTISNNLMNWKYKTIDQFVDDLNLVFYNCFQFNPEGNEVHSMGKKLKELFNFHWLENQDILNEIETDSDLEEDNYSSSYSSDDEYDDEDINENDITNPAIQYLEQKLKKMEVELQQLKRQELSKLSKERKRKHLGKTLLRRKAMKHSVDDLKKSITDKINELSDLEMNGMIRIIKNSLPADEILTSNEDEIEIDLDILDEATIARIYERYFEKKNNNNSKRKLSGNYSTAPTNKKKKTLKFLEKDEIINNNNYSDSEEDSSDSSDSDSD</sequence>